<comment type="subcellular location">
    <subcellularLocation>
        <location evidence="2">Plastid</location>
        <location evidence="2">Chloroplast membrane</location>
        <topology evidence="2">Multi-pass membrane protein</topology>
    </subcellularLocation>
</comment>
<comment type="similarity">
    <text evidence="2">Belongs to the TatC family.</text>
</comment>
<protein>
    <recommendedName>
        <fullName>Uncharacterized tatC-like protein ycf43</fullName>
    </recommendedName>
</protein>
<gene>
    <name type="primary">ycf43</name>
</gene>
<organism>
    <name type="scientific">Porphyra purpurea</name>
    <name type="common">Red seaweed</name>
    <name type="synonym">Ulva purpurea</name>
    <dbReference type="NCBI Taxonomy" id="2787"/>
    <lineage>
        <taxon>Eukaryota</taxon>
        <taxon>Rhodophyta</taxon>
        <taxon>Bangiophyceae</taxon>
        <taxon>Bangiales</taxon>
        <taxon>Bangiaceae</taxon>
        <taxon>Porphyra</taxon>
    </lineage>
</organism>
<reference key="1">
    <citation type="journal article" date="1995" name="Plant Mol. Biol. Rep.">
        <title>Complete nucleotide sequence of the Porphyra purpurea chloroplast genome.</title>
        <authorList>
            <person name="Reith M.E."/>
            <person name="Munholland J."/>
        </authorList>
    </citation>
    <scope>NUCLEOTIDE SEQUENCE [LARGE SCALE GENOMIC DNA]</scope>
    <source>
        <strain>Avonport</strain>
    </source>
</reference>
<geneLocation type="chloroplast"/>
<accession>P51264</accession>
<evidence type="ECO:0000255" key="1"/>
<evidence type="ECO:0000305" key="2"/>
<name>YCF43_PORPU</name>
<proteinExistence type="inferred from homology"/>
<keyword id="KW-0150">Chloroplast</keyword>
<keyword id="KW-0472">Membrane</keyword>
<keyword id="KW-0934">Plastid</keyword>
<keyword id="KW-0812">Transmembrane</keyword>
<keyword id="KW-1133">Transmembrane helix</keyword>
<dbReference type="EMBL" id="U38804">
    <property type="protein sequence ID" value="AAC08150.1"/>
    <property type="molecule type" value="Genomic_DNA"/>
</dbReference>
<dbReference type="PIR" id="S73185">
    <property type="entry name" value="S73185"/>
</dbReference>
<dbReference type="SMR" id="P51264"/>
<dbReference type="GO" id="GO:0031969">
    <property type="term" value="C:chloroplast membrane"/>
    <property type="evidence" value="ECO:0007669"/>
    <property type="project" value="UniProtKB-SubCell"/>
</dbReference>
<dbReference type="GO" id="GO:0033281">
    <property type="term" value="C:TAT protein transport complex"/>
    <property type="evidence" value="ECO:0007669"/>
    <property type="project" value="TreeGrafter"/>
</dbReference>
<dbReference type="GO" id="GO:0009977">
    <property type="term" value="F:proton motive force dependent protein transmembrane transporter activity"/>
    <property type="evidence" value="ECO:0007669"/>
    <property type="project" value="TreeGrafter"/>
</dbReference>
<dbReference type="GO" id="GO:0065002">
    <property type="term" value="P:intracellular protein transmembrane transport"/>
    <property type="evidence" value="ECO:0007669"/>
    <property type="project" value="TreeGrafter"/>
</dbReference>
<dbReference type="GO" id="GO:0043953">
    <property type="term" value="P:protein transport by the Tat complex"/>
    <property type="evidence" value="ECO:0007669"/>
    <property type="project" value="TreeGrafter"/>
</dbReference>
<dbReference type="HAMAP" id="MF_00902">
    <property type="entry name" value="TatC"/>
    <property type="match status" value="1"/>
</dbReference>
<dbReference type="InterPro" id="IPR019820">
    <property type="entry name" value="Sec-indep_translocase_CS"/>
</dbReference>
<dbReference type="InterPro" id="IPR002033">
    <property type="entry name" value="TatC"/>
</dbReference>
<dbReference type="NCBIfam" id="TIGR00945">
    <property type="entry name" value="tatC"/>
    <property type="match status" value="1"/>
</dbReference>
<dbReference type="PANTHER" id="PTHR30371">
    <property type="entry name" value="SEC-INDEPENDENT PROTEIN TRANSLOCASE PROTEIN TATC"/>
    <property type="match status" value="1"/>
</dbReference>
<dbReference type="PANTHER" id="PTHR30371:SF0">
    <property type="entry name" value="SEC-INDEPENDENT PROTEIN TRANSLOCASE PROTEIN TATC, CHLOROPLASTIC-RELATED"/>
    <property type="match status" value="1"/>
</dbReference>
<dbReference type="Pfam" id="PF00902">
    <property type="entry name" value="TatC"/>
    <property type="match status" value="1"/>
</dbReference>
<dbReference type="PRINTS" id="PR01840">
    <property type="entry name" value="TATCFAMILY"/>
</dbReference>
<dbReference type="PROSITE" id="PS01218">
    <property type="entry name" value="TATC"/>
    <property type="match status" value="1"/>
</dbReference>
<feature type="chain" id="PRO_0000098103" description="Uncharacterized tatC-like protein ycf43">
    <location>
        <begin position="1"/>
        <end position="254"/>
    </location>
</feature>
<feature type="transmembrane region" description="Helical" evidence="1">
    <location>
        <begin position="41"/>
        <end position="61"/>
    </location>
</feature>
<feature type="transmembrane region" description="Helical" evidence="1">
    <location>
        <begin position="64"/>
        <end position="84"/>
    </location>
</feature>
<feature type="transmembrane region" description="Helical" evidence="1">
    <location>
        <begin position="91"/>
        <end position="111"/>
    </location>
</feature>
<feature type="transmembrane region" description="Helical" evidence="1">
    <location>
        <begin position="125"/>
        <end position="145"/>
    </location>
</feature>
<feature type="transmembrane region" description="Helical" evidence="1">
    <location>
        <begin position="146"/>
        <end position="166"/>
    </location>
</feature>
<feature type="transmembrane region" description="Helical" evidence="1">
    <location>
        <begin position="172"/>
        <end position="192"/>
    </location>
</feature>
<feature type="transmembrane region" description="Helical" evidence="1">
    <location>
        <begin position="204"/>
        <end position="224"/>
    </location>
</feature>
<feature type="transmembrane region" description="Helical" evidence="1">
    <location>
        <begin position="232"/>
        <end position="252"/>
    </location>
</feature>
<sequence>MSLEPQNNLLANINTNSENLPENDVPMSITEHLEELRQRTVFVFIFFLLAATISFTQIKIIVEIFQAPAIGIKFLQLAPGEYFFSSIKIAIYCGIVATTPFGVYQVILYILPGLTNKERKVILPILIGSIVLFIVGGIFAYFVLAPAALNFLISYGADIVEPLWSFEQYFDFILLLLFSTGLAFEIPIIQLLLGISGTVSASQMLLAWRYIIIISTIIGAVLTPSTDPVTQIIMSSAVLALYFSGVIILFLLRK</sequence>